<organism>
    <name type="scientific">Pyropia yezoensis</name>
    <name type="common">Susabi-nori</name>
    <name type="synonym">Porphyra yezoensis</name>
    <dbReference type="NCBI Taxonomy" id="2788"/>
    <lineage>
        <taxon>Eukaryota</taxon>
        <taxon>Rhodophyta</taxon>
        <taxon>Bangiophyceae</taxon>
        <taxon>Bangiales</taxon>
        <taxon>Bangiaceae</taxon>
        <taxon>Pyropia</taxon>
    </lineage>
</organism>
<accession>Q1XDL5</accession>
<gene>
    <name type="primary">pbsA</name>
</gene>
<evidence type="ECO:0000250" key="1"/>
<evidence type="ECO:0000250" key="2">
    <source>
        <dbReference type="UniProtKB" id="O48782"/>
    </source>
</evidence>
<evidence type="ECO:0000305" key="3"/>
<reference key="1">
    <citation type="submission" date="2003-11" db="EMBL/GenBank/DDBJ databases">
        <title>Whole genome sequence of Porphyra yezoensis chloroplast.</title>
        <authorList>
            <person name="Kunimoto M."/>
            <person name="Morishima K."/>
            <person name="Yoshikawa M."/>
            <person name="Fukuda S."/>
            <person name="Kobayashi T."/>
            <person name="Kobayashi M."/>
            <person name="Okazaki T."/>
            <person name="Ohara I."/>
            <person name="Nakayama I."/>
        </authorList>
    </citation>
    <scope>NUCLEOTIDE SEQUENCE [LARGE SCALE GENOMIC DNA]</scope>
    <source>
        <strain>U-51</strain>
    </source>
</reference>
<geneLocation type="chloroplast"/>
<keyword id="KW-0150">Chloroplast</keyword>
<keyword id="KW-0349">Heme</keyword>
<keyword id="KW-0408">Iron</keyword>
<keyword id="KW-0479">Metal-binding</keyword>
<keyword id="KW-0560">Oxidoreductase</keyword>
<keyword id="KW-0602">Photosynthesis</keyword>
<keyword id="KW-0934">Plastid</keyword>
<name>HO_PYRYE</name>
<protein>
    <recommendedName>
        <fullName>Heme oxygenase</fullName>
        <ecNumber evidence="2">1.14.14.18</ecNumber>
    </recommendedName>
</protein>
<comment type="function">
    <text evidence="1">Catalyzes the opening of the heme ring with the release of iron. Key enzyme in the synthesis of the chromophoric part of the photosynthetic antennae.</text>
</comment>
<comment type="catalytic activity">
    <reaction evidence="2">
        <text>heme b + 3 reduced [NADPH--hemoprotein reductase] + 3 O2 = biliverdin IXalpha + CO + Fe(2+) + 3 oxidized [NADPH--hemoprotein reductase] + 3 H2O + H(+)</text>
        <dbReference type="Rhea" id="RHEA:21764"/>
        <dbReference type="Rhea" id="RHEA-COMP:11964"/>
        <dbReference type="Rhea" id="RHEA-COMP:11965"/>
        <dbReference type="ChEBI" id="CHEBI:15377"/>
        <dbReference type="ChEBI" id="CHEBI:15378"/>
        <dbReference type="ChEBI" id="CHEBI:15379"/>
        <dbReference type="ChEBI" id="CHEBI:17245"/>
        <dbReference type="ChEBI" id="CHEBI:29033"/>
        <dbReference type="ChEBI" id="CHEBI:57618"/>
        <dbReference type="ChEBI" id="CHEBI:57991"/>
        <dbReference type="ChEBI" id="CHEBI:58210"/>
        <dbReference type="ChEBI" id="CHEBI:60344"/>
        <dbReference type="EC" id="1.14.14.18"/>
    </reaction>
</comment>
<comment type="subcellular location">
    <subcellularLocation>
        <location>Plastid</location>
        <location>Chloroplast</location>
    </subcellularLocation>
</comment>
<comment type="similarity">
    <text evidence="3">Belongs to the heme oxygenase family.</text>
</comment>
<sequence>MVNTLANELREGTTKSHSMAENVSFVKSFLGGVVDKKSYRKLVANLYFVYCAIEEELFSNKNHPAIKPIYFTELNRKASLSEDLNYYYGSDWLDFIEPSPATKIYVDRIHTIGHKQPELLVAHAYTRYLGDLSGGQILKKIARGAMNLSDSGGTKFYDFDQIKDDKLFKDQYRAALDMIPLSDVQIQNIVSEANISFTLNMKMFEELNSSSLKIITMLIANTIQKFKAKYKSTLAMVD</sequence>
<feature type="chain" id="PRO_0000277255" description="Heme oxygenase">
    <location>
        <begin position="1"/>
        <end position="238"/>
    </location>
</feature>
<feature type="binding site" description="axial binding residue" evidence="1">
    <location>
        <position position="17"/>
    </location>
    <ligand>
        <name>heme b</name>
        <dbReference type="ChEBI" id="CHEBI:60344"/>
    </ligand>
    <ligandPart>
        <name>Fe</name>
        <dbReference type="ChEBI" id="CHEBI:18248"/>
    </ligandPart>
</feature>
<dbReference type="EC" id="1.14.14.18" evidence="2"/>
<dbReference type="EMBL" id="AP006715">
    <property type="protein sequence ID" value="BAE92396.1"/>
    <property type="molecule type" value="Genomic_DNA"/>
</dbReference>
<dbReference type="RefSeq" id="YP_536953.1">
    <property type="nucleotide sequence ID" value="NC_007932.1"/>
</dbReference>
<dbReference type="SMR" id="Q1XDL5"/>
<dbReference type="GeneID" id="3978895"/>
<dbReference type="GO" id="GO:0009507">
    <property type="term" value="C:chloroplast"/>
    <property type="evidence" value="ECO:0007669"/>
    <property type="project" value="UniProtKB-SubCell"/>
</dbReference>
<dbReference type="GO" id="GO:0020037">
    <property type="term" value="F:heme binding"/>
    <property type="evidence" value="ECO:0007669"/>
    <property type="project" value="TreeGrafter"/>
</dbReference>
<dbReference type="GO" id="GO:0004392">
    <property type="term" value="F:heme oxygenase (decyclizing) activity"/>
    <property type="evidence" value="ECO:0007669"/>
    <property type="project" value="UniProtKB-EC"/>
</dbReference>
<dbReference type="GO" id="GO:0046872">
    <property type="term" value="F:metal ion binding"/>
    <property type="evidence" value="ECO:0007669"/>
    <property type="project" value="UniProtKB-KW"/>
</dbReference>
<dbReference type="GO" id="GO:0042167">
    <property type="term" value="P:heme catabolic process"/>
    <property type="evidence" value="ECO:0007669"/>
    <property type="project" value="TreeGrafter"/>
</dbReference>
<dbReference type="GO" id="GO:0006788">
    <property type="term" value="P:heme oxidation"/>
    <property type="evidence" value="ECO:0007669"/>
    <property type="project" value="InterPro"/>
</dbReference>
<dbReference type="GO" id="GO:0015979">
    <property type="term" value="P:photosynthesis"/>
    <property type="evidence" value="ECO:0007669"/>
    <property type="project" value="UniProtKB-KW"/>
</dbReference>
<dbReference type="GO" id="GO:0006979">
    <property type="term" value="P:response to oxidative stress"/>
    <property type="evidence" value="ECO:0007669"/>
    <property type="project" value="TreeGrafter"/>
</dbReference>
<dbReference type="CDD" id="cd19165">
    <property type="entry name" value="HemeO"/>
    <property type="match status" value="1"/>
</dbReference>
<dbReference type="FunFam" id="1.20.910.10:FF:000001">
    <property type="entry name" value="Heme oxygenase 1"/>
    <property type="match status" value="1"/>
</dbReference>
<dbReference type="Gene3D" id="1.20.910.10">
    <property type="entry name" value="Heme oxygenase-like"/>
    <property type="match status" value="1"/>
</dbReference>
<dbReference type="InterPro" id="IPR002051">
    <property type="entry name" value="Haem_Oase"/>
</dbReference>
<dbReference type="InterPro" id="IPR016053">
    <property type="entry name" value="Haem_Oase-like"/>
</dbReference>
<dbReference type="InterPro" id="IPR016084">
    <property type="entry name" value="Haem_Oase-like_multi-hlx"/>
</dbReference>
<dbReference type="InterPro" id="IPR018207">
    <property type="entry name" value="Haem_oxygenase_CS"/>
</dbReference>
<dbReference type="PANTHER" id="PTHR10720">
    <property type="entry name" value="HEME OXYGENASE"/>
    <property type="match status" value="1"/>
</dbReference>
<dbReference type="PANTHER" id="PTHR10720:SF0">
    <property type="entry name" value="HEME OXYGENASE"/>
    <property type="match status" value="1"/>
</dbReference>
<dbReference type="Pfam" id="PF01126">
    <property type="entry name" value="Heme_oxygenase"/>
    <property type="match status" value="1"/>
</dbReference>
<dbReference type="PIRSF" id="PIRSF000343">
    <property type="entry name" value="Haem_Oase"/>
    <property type="match status" value="1"/>
</dbReference>
<dbReference type="PRINTS" id="PR00088">
    <property type="entry name" value="HAEMOXYGNASE"/>
</dbReference>
<dbReference type="SUPFAM" id="SSF48613">
    <property type="entry name" value="Heme oxygenase-like"/>
    <property type="match status" value="1"/>
</dbReference>
<dbReference type="PROSITE" id="PS00593">
    <property type="entry name" value="HEME_OXYGENASE"/>
    <property type="match status" value="1"/>
</dbReference>
<proteinExistence type="inferred from homology"/>